<accession>Q9XB42</accession>
<accession>Q2EEQ0</accession>
<protein>
    <recommendedName>
        <fullName>Uncharacterized protein YkfH</fullName>
    </recommendedName>
</protein>
<comment type="similarity">
    <text evidence="1">Belongs to the YeeT/YkfH/YpjJ family.</text>
</comment>
<organism>
    <name type="scientific">Escherichia coli (strain K12)</name>
    <dbReference type="NCBI Taxonomy" id="83333"/>
    <lineage>
        <taxon>Bacteria</taxon>
        <taxon>Pseudomonadati</taxon>
        <taxon>Pseudomonadota</taxon>
        <taxon>Gammaproteobacteria</taxon>
        <taxon>Enterobacterales</taxon>
        <taxon>Enterobacteriaceae</taxon>
        <taxon>Escherichia</taxon>
    </lineage>
</organism>
<feature type="chain" id="PRO_0000168550" description="Uncharacterized protein YkfH">
    <location>
        <begin position="1"/>
        <end position="73"/>
    </location>
</feature>
<proteinExistence type="inferred from homology"/>
<sequence>MKIISKRRAMTIYRQHPESRIFRYCTGKYQWHGSVCHYTGRDVPDIAGVLAVYAERRQDRNGPYTCLMSITLN</sequence>
<reference key="1">
    <citation type="submission" date="1996-02" db="EMBL/GenBank/DDBJ databases">
        <title>Systematic sequencing of the Escherichia coli genome: analysis of the 4.0 - 6.0 min (189,987 - 281,416bp) region.</title>
        <authorList>
            <person name="Takemoto K."/>
            <person name="Mori H."/>
            <person name="Murayama N."/>
            <person name="Kataoka K."/>
            <person name="Yano M."/>
            <person name="Itoh T."/>
            <person name="Yamamoto Y."/>
            <person name="Inokuchi H."/>
            <person name="Miki T."/>
            <person name="Hatada E."/>
            <person name="Fukuda R."/>
            <person name="Ichihara S."/>
            <person name="Mizuno T."/>
            <person name="Makino K."/>
            <person name="Nakata A."/>
            <person name="Yura T."/>
            <person name="Sampei G."/>
            <person name="Mizobuchi K."/>
        </authorList>
    </citation>
    <scope>NUCLEOTIDE SEQUENCE [LARGE SCALE GENOMIC DNA]</scope>
    <source>
        <strain>K12 / W3110 / ATCC 27325 / DSM 5911</strain>
    </source>
</reference>
<reference key="2">
    <citation type="journal article" date="1997" name="Science">
        <title>The complete genome sequence of Escherichia coli K-12.</title>
        <authorList>
            <person name="Blattner F.R."/>
            <person name="Plunkett G. III"/>
            <person name="Bloch C.A."/>
            <person name="Perna N.T."/>
            <person name="Burland V."/>
            <person name="Riley M."/>
            <person name="Collado-Vides J."/>
            <person name="Glasner J.D."/>
            <person name="Rode C.K."/>
            <person name="Mayhew G.F."/>
            <person name="Gregor J."/>
            <person name="Davis N.W."/>
            <person name="Kirkpatrick H.A."/>
            <person name="Goeden M.A."/>
            <person name="Rose D.J."/>
            <person name="Mau B."/>
            <person name="Shao Y."/>
        </authorList>
    </citation>
    <scope>NUCLEOTIDE SEQUENCE [LARGE SCALE GENOMIC DNA]</scope>
    <source>
        <strain>K12 / MG1655 / ATCC 47076</strain>
    </source>
</reference>
<reference key="3">
    <citation type="journal article" date="2006" name="Mol. Syst. Biol.">
        <title>Highly accurate genome sequences of Escherichia coli K-12 strains MG1655 and W3110.</title>
        <authorList>
            <person name="Hayashi K."/>
            <person name="Morooka N."/>
            <person name="Yamamoto Y."/>
            <person name="Fujita K."/>
            <person name="Isono K."/>
            <person name="Choi S."/>
            <person name="Ohtsubo E."/>
            <person name="Baba T."/>
            <person name="Wanner B.L."/>
            <person name="Mori H."/>
            <person name="Horiuchi T."/>
        </authorList>
    </citation>
    <scope>NUCLEOTIDE SEQUENCE [LARGE SCALE GENOMIC DNA]</scope>
    <source>
        <strain>K12 / W3110 / ATCC 27325 / DSM 5911</strain>
    </source>
</reference>
<dbReference type="EMBL" id="U00096">
    <property type="protein sequence ID" value="ABD18634.1"/>
    <property type="molecule type" value="Genomic_DNA"/>
</dbReference>
<dbReference type="EMBL" id="AP009048">
    <property type="protein sequence ID" value="BAA77915.1"/>
    <property type="molecule type" value="Genomic_DNA"/>
</dbReference>
<dbReference type="RefSeq" id="WP_000691994.1">
    <property type="nucleotide sequence ID" value="NZ_LN832404.1"/>
</dbReference>
<dbReference type="RefSeq" id="YP_588435.1">
    <property type="nucleotide sequence ID" value="NC_000913.3"/>
</dbReference>
<dbReference type="SMR" id="Q9XB42"/>
<dbReference type="BioGRID" id="4261274">
    <property type="interactions" value="41"/>
</dbReference>
<dbReference type="FunCoup" id="Q9XB42">
    <property type="interactions" value="14"/>
</dbReference>
<dbReference type="STRING" id="511145.b4504"/>
<dbReference type="PaxDb" id="511145-b4504"/>
<dbReference type="EnsemblBacteria" id="ABD18634">
    <property type="protein sequence ID" value="ABD18634"/>
    <property type="gene ID" value="b4504"/>
</dbReference>
<dbReference type="GeneID" id="1450236"/>
<dbReference type="KEGG" id="ecj:JW5956"/>
<dbReference type="KEGG" id="eco:b4504"/>
<dbReference type="PATRIC" id="fig|511145.12.peg.248"/>
<dbReference type="eggNOG" id="ENOG5032T7D">
    <property type="taxonomic scope" value="Bacteria"/>
</dbReference>
<dbReference type="HOGENOM" id="CLU_201031_0_0_6"/>
<dbReference type="InParanoid" id="Q9XB42"/>
<dbReference type="OMA" id="KWSGSIC"/>
<dbReference type="OrthoDB" id="6428729at2"/>
<dbReference type="PhylomeDB" id="Q9XB42"/>
<dbReference type="BioCyc" id="EcoCyc:MONOMER0-2654"/>
<dbReference type="PRO" id="PR:Q9XB42"/>
<dbReference type="Proteomes" id="UP000000625">
    <property type="component" value="Chromosome"/>
</dbReference>
<dbReference type="InterPro" id="IPR009329">
    <property type="entry name" value="DUF987"/>
</dbReference>
<dbReference type="Pfam" id="PF06174">
    <property type="entry name" value="DUF987"/>
    <property type="match status" value="1"/>
</dbReference>
<evidence type="ECO:0000305" key="1"/>
<gene>
    <name type="primary">ykfH</name>
    <name type="ordered locus">b4504</name>
    <name type="ordered locus">JW5956</name>
</gene>
<keyword id="KW-1185">Reference proteome</keyword>
<name>YKFH_ECOLI</name>